<proteinExistence type="inferred from homology"/>
<sequence>MQIDIIAPGRVKERYLRDAIDEYSKRLSRYCKLNIIEVADEKTPDHASEGVDRQIKAREGERIAKHLKDGAFVIALAINGKQLSSEELAAKINDLGLRGTSHIQLVIGGSIGLDDAILRRADFLLSFSKMTFPHQLMRVILLEQIYRAYKINAGEPYHK</sequence>
<name>RLMH_BIFLD</name>
<keyword id="KW-0963">Cytoplasm</keyword>
<keyword id="KW-0489">Methyltransferase</keyword>
<keyword id="KW-0698">rRNA processing</keyword>
<keyword id="KW-0949">S-adenosyl-L-methionine</keyword>
<keyword id="KW-0808">Transferase</keyword>
<dbReference type="EC" id="2.1.1.177" evidence="1"/>
<dbReference type="EMBL" id="CP000605">
    <property type="protein sequence ID" value="ACD99033.1"/>
    <property type="molecule type" value="Genomic_DNA"/>
</dbReference>
<dbReference type="RefSeq" id="WP_007053094.1">
    <property type="nucleotide sequence ID" value="NZ_AABM02000009.1"/>
</dbReference>
<dbReference type="SMR" id="B3DPH4"/>
<dbReference type="GeneID" id="69578996"/>
<dbReference type="KEGG" id="blj:BLD_1588"/>
<dbReference type="HOGENOM" id="CLU_100552_0_0_11"/>
<dbReference type="Proteomes" id="UP000002419">
    <property type="component" value="Chromosome"/>
</dbReference>
<dbReference type="GO" id="GO:0005737">
    <property type="term" value="C:cytoplasm"/>
    <property type="evidence" value="ECO:0007669"/>
    <property type="project" value="UniProtKB-SubCell"/>
</dbReference>
<dbReference type="GO" id="GO:0070038">
    <property type="term" value="F:rRNA (pseudouridine-N3-)-methyltransferase activity"/>
    <property type="evidence" value="ECO:0007669"/>
    <property type="project" value="UniProtKB-UniRule"/>
</dbReference>
<dbReference type="CDD" id="cd18081">
    <property type="entry name" value="RlmH-like"/>
    <property type="match status" value="1"/>
</dbReference>
<dbReference type="Gene3D" id="3.40.1280.10">
    <property type="match status" value="1"/>
</dbReference>
<dbReference type="HAMAP" id="MF_00658">
    <property type="entry name" value="23SrRNA_methyltr_H"/>
    <property type="match status" value="1"/>
</dbReference>
<dbReference type="InterPro" id="IPR029028">
    <property type="entry name" value="Alpha/beta_knot_MTases"/>
</dbReference>
<dbReference type="InterPro" id="IPR003742">
    <property type="entry name" value="RlmH-like"/>
</dbReference>
<dbReference type="InterPro" id="IPR029026">
    <property type="entry name" value="tRNA_m1G_MTases_N"/>
</dbReference>
<dbReference type="NCBIfam" id="NF000985">
    <property type="entry name" value="PRK00103.1-3"/>
    <property type="match status" value="1"/>
</dbReference>
<dbReference type="NCBIfam" id="TIGR00246">
    <property type="entry name" value="tRNA_RlmH_YbeA"/>
    <property type="match status" value="1"/>
</dbReference>
<dbReference type="PANTHER" id="PTHR33603">
    <property type="entry name" value="METHYLTRANSFERASE"/>
    <property type="match status" value="1"/>
</dbReference>
<dbReference type="PANTHER" id="PTHR33603:SF1">
    <property type="entry name" value="RIBOSOMAL RNA LARGE SUBUNIT METHYLTRANSFERASE H"/>
    <property type="match status" value="1"/>
</dbReference>
<dbReference type="Pfam" id="PF02590">
    <property type="entry name" value="SPOUT_MTase"/>
    <property type="match status" value="1"/>
</dbReference>
<dbReference type="PIRSF" id="PIRSF004505">
    <property type="entry name" value="MT_bac"/>
    <property type="match status" value="1"/>
</dbReference>
<dbReference type="SUPFAM" id="SSF75217">
    <property type="entry name" value="alpha/beta knot"/>
    <property type="match status" value="1"/>
</dbReference>
<organism>
    <name type="scientific">Bifidobacterium longum (strain DJO10A)</name>
    <dbReference type="NCBI Taxonomy" id="205913"/>
    <lineage>
        <taxon>Bacteria</taxon>
        <taxon>Bacillati</taxon>
        <taxon>Actinomycetota</taxon>
        <taxon>Actinomycetes</taxon>
        <taxon>Bifidobacteriales</taxon>
        <taxon>Bifidobacteriaceae</taxon>
        <taxon>Bifidobacterium</taxon>
    </lineage>
</organism>
<evidence type="ECO:0000255" key="1">
    <source>
        <dbReference type="HAMAP-Rule" id="MF_00658"/>
    </source>
</evidence>
<gene>
    <name evidence="1" type="primary">rlmH</name>
    <name type="ordered locus">BLD_1588</name>
</gene>
<protein>
    <recommendedName>
        <fullName evidence="1">Ribosomal RNA large subunit methyltransferase H</fullName>
        <ecNumber evidence="1">2.1.1.177</ecNumber>
    </recommendedName>
    <alternativeName>
        <fullName evidence="1">23S rRNA (pseudouridine1915-N3)-methyltransferase</fullName>
    </alternativeName>
    <alternativeName>
        <fullName evidence="1">23S rRNA m3Psi1915 methyltransferase</fullName>
    </alternativeName>
    <alternativeName>
        <fullName evidence="1">rRNA (pseudouridine-N3-)-methyltransferase RlmH</fullName>
    </alternativeName>
</protein>
<comment type="function">
    <text evidence="1">Specifically methylates the pseudouridine at position 1915 (m3Psi1915) in 23S rRNA.</text>
</comment>
<comment type="catalytic activity">
    <reaction evidence="1">
        <text>pseudouridine(1915) in 23S rRNA + S-adenosyl-L-methionine = N(3)-methylpseudouridine(1915) in 23S rRNA + S-adenosyl-L-homocysteine + H(+)</text>
        <dbReference type="Rhea" id="RHEA:42752"/>
        <dbReference type="Rhea" id="RHEA-COMP:10221"/>
        <dbReference type="Rhea" id="RHEA-COMP:10222"/>
        <dbReference type="ChEBI" id="CHEBI:15378"/>
        <dbReference type="ChEBI" id="CHEBI:57856"/>
        <dbReference type="ChEBI" id="CHEBI:59789"/>
        <dbReference type="ChEBI" id="CHEBI:65314"/>
        <dbReference type="ChEBI" id="CHEBI:74486"/>
        <dbReference type="EC" id="2.1.1.177"/>
    </reaction>
</comment>
<comment type="subunit">
    <text evidence="1">Homodimer.</text>
</comment>
<comment type="subcellular location">
    <subcellularLocation>
        <location evidence="1">Cytoplasm</location>
    </subcellularLocation>
</comment>
<comment type="similarity">
    <text evidence="1">Belongs to the RNA methyltransferase RlmH family.</text>
</comment>
<reference key="1">
    <citation type="journal article" date="2008" name="BMC Genomics">
        <title>Comparative genomic analysis of the gut bacterium Bifidobacterium longum reveals loci susceptible to deletion during pure culture growth.</title>
        <authorList>
            <person name="Lee J.H."/>
            <person name="Karamychev V.N."/>
            <person name="Kozyavkin S.A."/>
            <person name="Mills D."/>
            <person name="Pavlov A.R."/>
            <person name="Pavlova N.V."/>
            <person name="Polouchine N.N."/>
            <person name="Richardson P.M."/>
            <person name="Shakhova V.V."/>
            <person name="Slesarev A.I."/>
            <person name="Weimer B."/>
            <person name="O'Sullivan D.J."/>
        </authorList>
    </citation>
    <scope>NUCLEOTIDE SEQUENCE [LARGE SCALE GENOMIC DNA]</scope>
    <source>
        <strain>DJO10A</strain>
    </source>
</reference>
<feature type="chain" id="PRO_0000366565" description="Ribosomal RNA large subunit methyltransferase H">
    <location>
        <begin position="1"/>
        <end position="159"/>
    </location>
</feature>
<feature type="binding site" evidence="1">
    <location>
        <position position="76"/>
    </location>
    <ligand>
        <name>S-adenosyl-L-methionine</name>
        <dbReference type="ChEBI" id="CHEBI:59789"/>
    </ligand>
</feature>
<feature type="binding site" evidence="1">
    <location>
        <position position="108"/>
    </location>
    <ligand>
        <name>S-adenosyl-L-methionine</name>
        <dbReference type="ChEBI" id="CHEBI:59789"/>
    </ligand>
</feature>
<feature type="binding site" evidence="1">
    <location>
        <begin position="127"/>
        <end position="132"/>
    </location>
    <ligand>
        <name>S-adenosyl-L-methionine</name>
        <dbReference type="ChEBI" id="CHEBI:59789"/>
    </ligand>
</feature>
<accession>B3DPH4</accession>